<proteinExistence type="inferred from homology"/>
<protein>
    <recommendedName>
        <fullName evidence="1">Protein translocase subunit SecA 1</fullName>
        <ecNumber evidence="1">7.4.2.8</ecNumber>
    </recommendedName>
</protein>
<feature type="chain" id="PRO_0000321015" description="Protein translocase subunit SecA 1">
    <location>
        <begin position="1"/>
        <end position="843"/>
    </location>
</feature>
<feature type="region of interest" description="Disordered" evidence="2">
    <location>
        <begin position="799"/>
        <end position="826"/>
    </location>
</feature>
<feature type="compositionally biased region" description="Basic and acidic residues" evidence="2">
    <location>
        <begin position="799"/>
        <end position="813"/>
    </location>
</feature>
<feature type="binding site" evidence="1">
    <location>
        <position position="91"/>
    </location>
    <ligand>
        <name>ATP</name>
        <dbReference type="ChEBI" id="CHEBI:30616"/>
    </ligand>
</feature>
<feature type="binding site" evidence="1">
    <location>
        <begin position="109"/>
        <end position="113"/>
    </location>
    <ligand>
        <name>ATP</name>
        <dbReference type="ChEBI" id="CHEBI:30616"/>
    </ligand>
</feature>
<feature type="binding site" evidence="1">
    <location>
        <position position="498"/>
    </location>
    <ligand>
        <name>ATP</name>
        <dbReference type="ChEBI" id="CHEBI:30616"/>
    </ligand>
</feature>
<feature type="binding site" evidence="1">
    <location>
        <position position="829"/>
    </location>
    <ligand>
        <name>Zn(2+)</name>
        <dbReference type="ChEBI" id="CHEBI:29105"/>
    </ligand>
</feature>
<feature type="binding site" evidence="1">
    <location>
        <position position="831"/>
    </location>
    <ligand>
        <name>Zn(2+)</name>
        <dbReference type="ChEBI" id="CHEBI:29105"/>
    </ligand>
</feature>
<feature type="binding site" evidence="1">
    <location>
        <position position="840"/>
    </location>
    <ligand>
        <name>Zn(2+)</name>
        <dbReference type="ChEBI" id="CHEBI:29105"/>
    </ligand>
</feature>
<feature type="binding site" evidence="1">
    <location>
        <position position="841"/>
    </location>
    <ligand>
        <name>Zn(2+)</name>
        <dbReference type="ChEBI" id="CHEBI:29105"/>
    </ligand>
</feature>
<name>SECA1_STAAE</name>
<reference key="1">
    <citation type="journal article" date="2008" name="J. Bacteriol.">
        <title>Genome sequence of Staphylococcus aureus strain Newman and comparative analysis of staphylococcal genomes: polymorphism and evolution of two major pathogenicity islands.</title>
        <authorList>
            <person name="Baba T."/>
            <person name="Bae T."/>
            <person name="Schneewind O."/>
            <person name="Takeuchi F."/>
            <person name="Hiramatsu K."/>
        </authorList>
    </citation>
    <scope>NUCLEOTIDE SEQUENCE [LARGE SCALE GENOMIC DNA]</scope>
    <source>
        <strain>Newman</strain>
    </source>
</reference>
<gene>
    <name evidence="1" type="primary">secA1</name>
    <name type="ordered locus">NWMN_0722</name>
</gene>
<accession>A6QF62</accession>
<comment type="function">
    <text evidence="1">Part of the Sec protein translocase complex. Interacts with the SecYEG preprotein conducting channel. Has a central role in coupling the hydrolysis of ATP to the transfer of proteins into and across the cell membrane, serving as an ATP-driven molecular motor driving the stepwise translocation of polypeptide chains across the membrane.</text>
</comment>
<comment type="catalytic activity">
    <reaction evidence="1">
        <text>ATP + H2O + cellular proteinSide 1 = ADP + phosphate + cellular proteinSide 2.</text>
        <dbReference type="EC" id="7.4.2.8"/>
    </reaction>
</comment>
<comment type="cofactor">
    <cofactor evidence="1">
        <name>Zn(2+)</name>
        <dbReference type="ChEBI" id="CHEBI:29105"/>
    </cofactor>
    <text evidence="1">May bind 1 zinc ion per subunit.</text>
</comment>
<comment type="subunit">
    <text evidence="1">Monomer and homodimer. Part of the essential Sec protein translocation apparatus which comprises SecA, SecYEG and auxiliary proteins SecDF. Other proteins may also be involved.</text>
</comment>
<comment type="subcellular location">
    <subcellularLocation>
        <location evidence="1">Cell membrane</location>
        <topology evidence="1">Peripheral membrane protein</topology>
        <orientation evidence="1">Cytoplasmic side</orientation>
    </subcellularLocation>
    <subcellularLocation>
        <location evidence="1">Cytoplasm</location>
    </subcellularLocation>
    <text evidence="1">Distribution is 50-50.</text>
</comment>
<comment type="similarity">
    <text evidence="1">Belongs to the SecA family.</text>
</comment>
<evidence type="ECO:0000255" key="1">
    <source>
        <dbReference type="HAMAP-Rule" id="MF_01382"/>
    </source>
</evidence>
<evidence type="ECO:0000256" key="2">
    <source>
        <dbReference type="SAM" id="MobiDB-lite"/>
    </source>
</evidence>
<keyword id="KW-0067">ATP-binding</keyword>
<keyword id="KW-1003">Cell membrane</keyword>
<keyword id="KW-0963">Cytoplasm</keyword>
<keyword id="KW-0472">Membrane</keyword>
<keyword id="KW-0479">Metal-binding</keyword>
<keyword id="KW-0547">Nucleotide-binding</keyword>
<keyword id="KW-0653">Protein transport</keyword>
<keyword id="KW-1278">Translocase</keyword>
<keyword id="KW-0811">Translocation</keyword>
<keyword id="KW-0813">Transport</keyword>
<keyword id="KW-0862">Zinc</keyword>
<organism>
    <name type="scientific">Staphylococcus aureus (strain Newman)</name>
    <dbReference type="NCBI Taxonomy" id="426430"/>
    <lineage>
        <taxon>Bacteria</taxon>
        <taxon>Bacillati</taxon>
        <taxon>Bacillota</taxon>
        <taxon>Bacilli</taxon>
        <taxon>Bacillales</taxon>
        <taxon>Staphylococcaceae</taxon>
        <taxon>Staphylococcus</taxon>
    </lineage>
</organism>
<sequence length="843" mass="95960">MGFLSKILDGNNKEIKQLGKLADKVIALEEKTAILTDEEIRNKTKQFQTELADIDNVKKQNDYLDKILPEAYALVREGSKRVFNMTPYKVQIMGGIAIHKGDIAEMRTGEGKTLTATMPTYLNALAGRGVHVITVNEYLSSVQSEEMAELYNFLGLTVGLNLNSKTTEEKREAYAQDITYSTNNELGFDYLRDNMVNYSEDRVMRPLHFAIIDEVDSILIDEARTPLIISGEAEKSTSLYTQANVFAKMLKQDEDYKYDEKTKAVHLTEQGADKAERMFKVENLYDVQNVDVISHINTALRAHVTLQRDVDYMVVDGEVLIVDQFTGRTMPGRRFSEGLHQAIEAKEGVQIQNESKTMASITFQNYFRMYNKLAGMTGTAKTEEEEFRNIYNMTVTQIPTNKPVQRNDKSDLIYISQKGKFDAVVEDVVEKHKAGQPVLLGTVAVETSEYISNLLKKRGIRHDVLNAKNHEREAEIVAGAGQKGAVTIATNMAGRGTDIKLGEGVEELGGLAVIGTERHESRRIDDQLRGRSGRQGDKGDSRFYLSLQDELMIRFGSERLQKMMSRLGLDDSTPIESKMVSRAVESAQKRVEGNNFDARKRILEYDEVLRKQREIIYNERNSIIDEEDSSQVVDAMLRSTLQRSINYYINTADDEPEYQPFIDYINDIFLQEGDITEDDIKGKDAEDIFEVVWAKIEAAYQSQKDILEEQMNEFERMILLRSIDSHWTDHIDTMDQLRQGIHLRSYAQQNPLRDYQNEGHELFDIMMQNIEEDTCKFILKSVVQVEDNIEREKTTEFGEAKHVSAEDGKEKVKPKPIVKGDQVGRNDDCPCGSGKKFKNCHGK</sequence>
<dbReference type="EC" id="7.4.2.8" evidence="1"/>
<dbReference type="EMBL" id="AP009351">
    <property type="protein sequence ID" value="BAF66994.1"/>
    <property type="molecule type" value="Genomic_DNA"/>
</dbReference>
<dbReference type="SMR" id="A6QF62"/>
<dbReference type="KEGG" id="sae:NWMN_0722"/>
<dbReference type="HOGENOM" id="CLU_005314_3_0_9"/>
<dbReference type="Proteomes" id="UP000006386">
    <property type="component" value="Chromosome"/>
</dbReference>
<dbReference type="GO" id="GO:0031522">
    <property type="term" value="C:cell envelope Sec protein transport complex"/>
    <property type="evidence" value="ECO:0007669"/>
    <property type="project" value="TreeGrafter"/>
</dbReference>
<dbReference type="GO" id="GO:0005829">
    <property type="term" value="C:cytosol"/>
    <property type="evidence" value="ECO:0007669"/>
    <property type="project" value="TreeGrafter"/>
</dbReference>
<dbReference type="GO" id="GO:0005886">
    <property type="term" value="C:plasma membrane"/>
    <property type="evidence" value="ECO:0007669"/>
    <property type="project" value="UniProtKB-SubCell"/>
</dbReference>
<dbReference type="GO" id="GO:0005524">
    <property type="term" value="F:ATP binding"/>
    <property type="evidence" value="ECO:0007669"/>
    <property type="project" value="UniProtKB-UniRule"/>
</dbReference>
<dbReference type="GO" id="GO:0046872">
    <property type="term" value="F:metal ion binding"/>
    <property type="evidence" value="ECO:0007669"/>
    <property type="project" value="UniProtKB-KW"/>
</dbReference>
<dbReference type="GO" id="GO:0008564">
    <property type="term" value="F:protein-exporting ATPase activity"/>
    <property type="evidence" value="ECO:0007669"/>
    <property type="project" value="UniProtKB-EC"/>
</dbReference>
<dbReference type="GO" id="GO:0065002">
    <property type="term" value="P:intracellular protein transmembrane transport"/>
    <property type="evidence" value="ECO:0007669"/>
    <property type="project" value="UniProtKB-UniRule"/>
</dbReference>
<dbReference type="GO" id="GO:0017038">
    <property type="term" value="P:protein import"/>
    <property type="evidence" value="ECO:0007669"/>
    <property type="project" value="InterPro"/>
</dbReference>
<dbReference type="GO" id="GO:0006605">
    <property type="term" value="P:protein targeting"/>
    <property type="evidence" value="ECO:0007669"/>
    <property type="project" value="UniProtKB-UniRule"/>
</dbReference>
<dbReference type="GO" id="GO:0043952">
    <property type="term" value="P:protein transport by the Sec complex"/>
    <property type="evidence" value="ECO:0007669"/>
    <property type="project" value="TreeGrafter"/>
</dbReference>
<dbReference type="CDD" id="cd17928">
    <property type="entry name" value="DEXDc_SecA"/>
    <property type="match status" value="1"/>
</dbReference>
<dbReference type="CDD" id="cd18803">
    <property type="entry name" value="SF2_C_secA"/>
    <property type="match status" value="1"/>
</dbReference>
<dbReference type="FunFam" id="3.40.50.300:FF:000694">
    <property type="entry name" value="Preprotein translocase subunit SecA"/>
    <property type="match status" value="1"/>
</dbReference>
<dbReference type="FunFam" id="3.90.1440.10:FF:000002">
    <property type="entry name" value="Protein translocase subunit SecA"/>
    <property type="match status" value="1"/>
</dbReference>
<dbReference type="Gene3D" id="1.10.3060.10">
    <property type="entry name" value="Helical scaffold and wing domains of SecA"/>
    <property type="match status" value="1"/>
</dbReference>
<dbReference type="Gene3D" id="3.40.50.300">
    <property type="entry name" value="P-loop containing nucleotide triphosphate hydrolases"/>
    <property type="match status" value="2"/>
</dbReference>
<dbReference type="Gene3D" id="3.90.1440.10">
    <property type="entry name" value="SecA, preprotein cross-linking domain"/>
    <property type="match status" value="1"/>
</dbReference>
<dbReference type="HAMAP" id="MF_01382">
    <property type="entry name" value="SecA"/>
    <property type="match status" value="1"/>
</dbReference>
<dbReference type="InterPro" id="IPR014001">
    <property type="entry name" value="Helicase_ATP-bd"/>
</dbReference>
<dbReference type="InterPro" id="IPR001650">
    <property type="entry name" value="Helicase_C-like"/>
</dbReference>
<dbReference type="InterPro" id="IPR027417">
    <property type="entry name" value="P-loop_NTPase"/>
</dbReference>
<dbReference type="InterPro" id="IPR004027">
    <property type="entry name" value="SEC_C_motif"/>
</dbReference>
<dbReference type="InterPro" id="IPR000185">
    <property type="entry name" value="SecA"/>
</dbReference>
<dbReference type="InterPro" id="IPR020937">
    <property type="entry name" value="SecA_CS"/>
</dbReference>
<dbReference type="InterPro" id="IPR011115">
    <property type="entry name" value="SecA_DEAD"/>
</dbReference>
<dbReference type="InterPro" id="IPR014018">
    <property type="entry name" value="SecA_motor_DEAD"/>
</dbReference>
<dbReference type="InterPro" id="IPR011130">
    <property type="entry name" value="SecA_preprotein_X-link_dom"/>
</dbReference>
<dbReference type="InterPro" id="IPR044722">
    <property type="entry name" value="SecA_SF2_C"/>
</dbReference>
<dbReference type="InterPro" id="IPR011116">
    <property type="entry name" value="SecA_Wing/Scaffold"/>
</dbReference>
<dbReference type="InterPro" id="IPR036266">
    <property type="entry name" value="SecA_Wing/Scaffold_sf"/>
</dbReference>
<dbReference type="InterPro" id="IPR036670">
    <property type="entry name" value="SecA_X-link_sf"/>
</dbReference>
<dbReference type="NCBIfam" id="NF006630">
    <property type="entry name" value="PRK09200.1"/>
    <property type="match status" value="1"/>
</dbReference>
<dbReference type="NCBIfam" id="TIGR00963">
    <property type="entry name" value="secA"/>
    <property type="match status" value="1"/>
</dbReference>
<dbReference type="PANTHER" id="PTHR30612:SF0">
    <property type="entry name" value="CHLOROPLAST PROTEIN-TRANSPORTING ATPASE"/>
    <property type="match status" value="1"/>
</dbReference>
<dbReference type="PANTHER" id="PTHR30612">
    <property type="entry name" value="SECA INNER MEMBRANE COMPONENT OF SEC PROTEIN SECRETION SYSTEM"/>
    <property type="match status" value="1"/>
</dbReference>
<dbReference type="Pfam" id="PF21090">
    <property type="entry name" value="P-loop_SecA"/>
    <property type="match status" value="1"/>
</dbReference>
<dbReference type="Pfam" id="PF02810">
    <property type="entry name" value="SEC-C"/>
    <property type="match status" value="1"/>
</dbReference>
<dbReference type="Pfam" id="PF07517">
    <property type="entry name" value="SecA_DEAD"/>
    <property type="match status" value="1"/>
</dbReference>
<dbReference type="Pfam" id="PF01043">
    <property type="entry name" value="SecA_PP_bind"/>
    <property type="match status" value="1"/>
</dbReference>
<dbReference type="Pfam" id="PF07516">
    <property type="entry name" value="SecA_SW"/>
    <property type="match status" value="1"/>
</dbReference>
<dbReference type="PRINTS" id="PR00906">
    <property type="entry name" value="SECA"/>
</dbReference>
<dbReference type="SMART" id="SM00957">
    <property type="entry name" value="SecA_DEAD"/>
    <property type="match status" value="1"/>
</dbReference>
<dbReference type="SMART" id="SM00958">
    <property type="entry name" value="SecA_PP_bind"/>
    <property type="match status" value="1"/>
</dbReference>
<dbReference type="SUPFAM" id="SSF81886">
    <property type="entry name" value="Helical scaffold and wing domains of SecA"/>
    <property type="match status" value="1"/>
</dbReference>
<dbReference type="SUPFAM" id="SSF52540">
    <property type="entry name" value="P-loop containing nucleoside triphosphate hydrolases"/>
    <property type="match status" value="2"/>
</dbReference>
<dbReference type="SUPFAM" id="SSF81767">
    <property type="entry name" value="Pre-protein crosslinking domain of SecA"/>
    <property type="match status" value="1"/>
</dbReference>
<dbReference type="PROSITE" id="PS01312">
    <property type="entry name" value="SECA"/>
    <property type="match status" value="1"/>
</dbReference>
<dbReference type="PROSITE" id="PS51196">
    <property type="entry name" value="SECA_MOTOR_DEAD"/>
    <property type="match status" value="1"/>
</dbReference>